<keyword id="KW-0413">Isomerase</keyword>
<keyword id="KW-1185">Reference proteome</keyword>
<sequence>MKHIHIIDSHTGGEPTRVVVSGFPALGGGTMAERLAVLAREHDRYRAACILEPRGSDVLVGALLCEPVSAGAAAGVIFFNNAGYLGMCGHGTIGLVRTLHHMGRIGPGVHRIETPVGDVEATLHDDLSVSVRNVLAYRHAKDVVVDVPGHGAVTGDVAWGGNWFFLVSDHGQRVAGENVAALAAYASAVRAALERAGVTGRDGAPIDHIELFADDPEYDSRSFVLCPGHAYDRSPCGTGTSAKLACLAADGKLAAGVTWRQASVIGSVFSASYAAAEGGVVPTIRGSAHLSAEATLVIEDDDPFGWGIAS</sequence>
<organism>
    <name type="scientific">Burkholderia pseudomallei (strain K96243)</name>
    <dbReference type="NCBI Taxonomy" id="272560"/>
    <lineage>
        <taxon>Bacteria</taxon>
        <taxon>Pseudomonadati</taxon>
        <taxon>Pseudomonadota</taxon>
        <taxon>Betaproteobacteria</taxon>
        <taxon>Burkholderiales</taxon>
        <taxon>Burkholderiaceae</taxon>
        <taxon>Burkholderia</taxon>
        <taxon>pseudomallei group</taxon>
    </lineage>
</organism>
<protein>
    <recommendedName>
        <fullName>4-hydroxyproline epimerase</fullName>
        <ecNumber>5.1.1.8</ecNumber>
    </recommendedName>
    <alternativeName>
        <fullName>Hydroxyproline-2-epimerase</fullName>
        <shortName>BpHyPRE</shortName>
    </alternativeName>
</protein>
<comment type="function">
    <text>Allows intracellular utilization of 4-hydroxyproline, one of the major constituents of host collagen, by converting 4-hydroxy-L-proline to 4-hydroxy-D-proline, which can be further metabolized by intracellular 4-hydroxy-D-proline oxidases.</text>
</comment>
<comment type="catalytic activity">
    <reaction evidence="3">
        <text>trans-4-hydroxy-L-proline = cis-4-hydroxy-D-proline</text>
        <dbReference type="Rhea" id="RHEA:21152"/>
        <dbReference type="ChEBI" id="CHEBI:57690"/>
        <dbReference type="ChEBI" id="CHEBI:58375"/>
        <dbReference type="EC" id="5.1.1.8"/>
    </reaction>
</comment>
<comment type="activity regulation">
    <text evidence="3">Inhibited by iodoacetate, iodoacetamide and by high amounts (10 mM) of pyrrole-2-carboxylic acid (PYC). Not inhibited by PYC at 1 mM.</text>
</comment>
<comment type="biophysicochemical properties">
    <kinetics>
        <KM evidence="3">14.4 mM for 4-hydroxy-L-proline</KM>
        <KM evidence="3">17.1 mM for 4-hydroxy-D-proline</KM>
        <Vmax evidence="3">2.1 uM/sec/mg enzyme with L-proline as substrate (at 37 degrees Celsius)</Vmax>
        <Vmax evidence="3">2.4 uM/sec/mg enzyme with D-proline as substrate (at 37 degrees Celsius)</Vmax>
    </kinetics>
</comment>
<comment type="subunit">
    <text evidence="1">Homodimer.</text>
</comment>
<comment type="miscellaneous">
    <text>This enzyme does not require pyridoxal phosphate (PLP) as a cofactor.</text>
</comment>
<comment type="similarity">
    <text evidence="4">Belongs to the proline racemase family.</text>
</comment>
<gene>
    <name type="ordered locus">BPSS0332</name>
</gene>
<proteinExistence type="evidence at protein level"/>
<name>4HYPE_BURPS</name>
<feature type="chain" id="PRO_0000354034" description="4-hydroxyproline epimerase">
    <location>
        <begin position="1"/>
        <end position="310"/>
    </location>
</feature>
<feature type="active site" description="Proton acceptor" evidence="2">
    <location>
        <position position="88"/>
    </location>
</feature>
<feature type="active site" description="Proton donor" evidence="2">
    <location>
        <position position="236"/>
    </location>
</feature>
<feature type="binding site" evidence="2">
    <location>
        <begin position="89"/>
        <end position="90"/>
    </location>
    <ligand>
        <name>substrate</name>
    </ligand>
</feature>
<feature type="binding site" evidence="2">
    <location>
        <position position="208"/>
    </location>
    <ligand>
        <name>substrate</name>
    </ligand>
</feature>
<feature type="binding site" evidence="2">
    <location>
        <position position="232"/>
    </location>
    <ligand>
        <name>substrate</name>
    </ligand>
</feature>
<feature type="binding site" evidence="2">
    <location>
        <begin position="237"/>
        <end position="238"/>
    </location>
    <ligand>
        <name>substrate</name>
    </ligand>
</feature>
<evidence type="ECO:0000250" key="1"/>
<evidence type="ECO:0000250" key="2">
    <source>
        <dbReference type="UniProtKB" id="Q4KGU2"/>
    </source>
</evidence>
<evidence type="ECO:0000269" key="3">
    <source>
    </source>
</evidence>
<evidence type="ECO:0000305" key="4"/>
<accession>Q63NG7</accession>
<dbReference type="EC" id="5.1.1.8"/>
<dbReference type="EMBL" id="EF495345">
    <property type="protein sequence ID" value="ABS82397.1"/>
    <property type="molecule type" value="Genomic_DNA"/>
</dbReference>
<dbReference type="EMBL" id="BX571966">
    <property type="protein sequence ID" value="CAH37780.1"/>
    <property type="molecule type" value="Genomic_DNA"/>
</dbReference>
<dbReference type="RefSeq" id="WP_004523447.1">
    <property type="nucleotide sequence ID" value="NZ_CP009537.1"/>
</dbReference>
<dbReference type="RefSeq" id="YP_110352.1">
    <property type="nucleotide sequence ID" value="NC_006351.1"/>
</dbReference>
<dbReference type="SMR" id="Q63NG7"/>
<dbReference type="STRING" id="272560.BPSS0332"/>
<dbReference type="KEGG" id="bps:BPSS0332"/>
<dbReference type="PATRIC" id="fig|272560.51.peg.6451"/>
<dbReference type="eggNOG" id="COG3938">
    <property type="taxonomic scope" value="Bacteria"/>
</dbReference>
<dbReference type="BRENDA" id="5.1.1.8">
    <property type="organism ID" value="1031"/>
</dbReference>
<dbReference type="Proteomes" id="UP000000605">
    <property type="component" value="Chromosome 2"/>
</dbReference>
<dbReference type="GO" id="GO:0047580">
    <property type="term" value="F:4-hydroxyproline epimerase activity"/>
    <property type="evidence" value="ECO:0007669"/>
    <property type="project" value="UniProtKB-EC"/>
</dbReference>
<dbReference type="FunFam" id="3.10.310.10:FF:000012">
    <property type="entry name" value="4-hydroxyproline 2-epimerase"/>
    <property type="match status" value="1"/>
</dbReference>
<dbReference type="Gene3D" id="3.10.310.10">
    <property type="entry name" value="Diaminopimelate Epimerase, Chain A, domain 1"/>
    <property type="match status" value="2"/>
</dbReference>
<dbReference type="InterPro" id="IPR008794">
    <property type="entry name" value="Pro_racemase_fam"/>
</dbReference>
<dbReference type="NCBIfam" id="NF010577">
    <property type="entry name" value="PRK13970.1"/>
    <property type="match status" value="1"/>
</dbReference>
<dbReference type="PANTHER" id="PTHR33442">
    <property type="entry name" value="TRANS-3-HYDROXY-L-PROLINE DEHYDRATASE"/>
    <property type="match status" value="1"/>
</dbReference>
<dbReference type="PANTHER" id="PTHR33442:SF1">
    <property type="entry name" value="TRANS-3-HYDROXY-L-PROLINE DEHYDRATASE"/>
    <property type="match status" value="1"/>
</dbReference>
<dbReference type="Pfam" id="PF05544">
    <property type="entry name" value="Pro_racemase"/>
    <property type="match status" value="1"/>
</dbReference>
<dbReference type="PIRSF" id="PIRSF029792">
    <property type="entry name" value="Pro_racemase"/>
    <property type="match status" value="1"/>
</dbReference>
<dbReference type="SFLD" id="SFLDS00028">
    <property type="entry name" value="Proline_Racemase"/>
    <property type="match status" value="1"/>
</dbReference>
<dbReference type="SUPFAM" id="SSF54506">
    <property type="entry name" value="Diaminopimelate epimerase-like"/>
    <property type="match status" value="1"/>
</dbReference>
<reference key="1">
    <citation type="journal article" date="2007" name="PLoS ONE">
        <title>Molecular and structural discrimination of proline racemase and hydroxyproline-2-epimerase from nosocomial and bacterial pathogens.</title>
        <authorList>
            <person name="Goytia M."/>
            <person name="Chamond N."/>
            <person name="Cosson A."/>
            <person name="Coatnoan N."/>
            <person name="Hermant D."/>
            <person name="Berneman A."/>
            <person name="Minoprio P."/>
        </authorList>
    </citation>
    <scope>NUCLEOTIDE SEQUENCE [GENOMIC DNA]</scope>
    <scope>CATALYTIC ACTIVITY</scope>
    <scope>ACTIVITY REGULATION</scope>
    <scope>BIOPHYSICOCHEMICAL PROPERTIES</scope>
    <source>
        <strain>K96243</strain>
    </source>
</reference>
<reference key="2">
    <citation type="journal article" date="2004" name="Proc. Natl. Acad. Sci. U.S.A.">
        <title>Genomic plasticity of the causative agent of melioidosis, Burkholderia pseudomallei.</title>
        <authorList>
            <person name="Holden M.T.G."/>
            <person name="Titball R.W."/>
            <person name="Peacock S.J."/>
            <person name="Cerdeno-Tarraga A.-M."/>
            <person name="Atkins T."/>
            <person name="Crossman L.C."/>
            <person name="Pitt T."/>
            <person name="Churcher C."/>
            <person name="Mungall K.L."/>
            <person name="Bentley S.D."/>
            <person name="Sebaihia M."/>
            <person name="Thomson N.R."/>
            <person name="Bason N."/>
            <person name="Beacham I.R."/>
            <person name="Brooks K."/>
            <person name="Brown K.A."/>
            <person name="Brown N.F."/>
            <person name="Challis G.L."/>
            <person name="Cherevach I."/>
            <person name="Chillingworth T."/>
            <person name="Cronin A."/>
            <person name="Crossett B."/>
            <person name="Davis P."/>
            <person name="DeShazer D."/>
            <person name="Feltwell T."/>
            <person name="Fraser A."/>
            <person name="Hance Z."/>
            <person name="Hauser H."/>
            <person name="Holroyd S."/>
            <person name="Jagels K."/>
            <person name="Keith K.E."/>
            <person name="Maddison M."/>
            <person name="Moule S."/>
            <person name="Price C."/>
            <person name="Quail M.A."/>
            <person name="Rabbinowitsch E."/>
            <person name="Rutherford K."/>
            <person name="Sanders M."/>
            <person name="Simmonds M."/>
            <person name="Songsivilai S."/>
            <person name="Stevens K."/>
            <person name="Tumapa S."/>
            <person name="Vesaratchavest M."/>
            <person name="Whitehead S."/>
            <person name="Yeats C."/>
            <person name="Barrell B.G."/>
            <person name="Oyston P.C.F."/>
            <person name="Parkhill J."/>
        </authorList>
    </citation>
    <scope>NUCLEOTIDE SEQUENCE [LARGE SCALE GENOMIC DNA]</scope>
    <source>
        <strain>K96243</strain>
    </source>
</reference>